<protein>
    <recommendedName>
        <fullName>Elongation factor Ts</fullName>
        <shortName>EF-Ts</shortName>
    </recommendedName>
</protein>
<sequence length="294" mass="32575">MAITAQMVKELREKTGAGMMDCKKALTETNGDMEKAIDWLREKGIAKAAKKADRIAAEGMAYIAVEGNTAVILEVNSETDFVAKNEAFQTLVKELAAHLLKQKPASLDEALGQTMDNGSTVQDYINEAIAKIGEKITLRRFAVVNKADGETFGAYLHMGGRIGVLTLLAGNASEDVAKDVAMHIAALHPKYVSRDDVPQEEIAHEREVLKQQALNEGKPEKIVEKMVEGRLNKFYEDVCLLEQAFVKNPDVTVRQYVESNGATVKQFIRYEVGEGLEKRQDNFAEEVMSQVRKQ</sequence>
<organism>
    <name type="scientific">Geobacillus kaustophilus (strain HTA426)</name>
    <dbReference type="NCBI Taxonomy" id="235909"/>
    <lineage>
        <taxon>Bacteria</taxon>
        <taxon>Bacillati</taxon>
        <taxon>Bacillota</taxon>
        <taxon>Bacilli</taxon>
        <taxon>Bacillales</taxon>
        <taxon>Anoxybacillaceae</taxon>
        <taxon>Geobacillus</taxon>
        <taxon>Geobacillus thermoleovorans group</taxon>
    </lineage>
</organism>
<name>EFTS_GEOKA</name>
<evidence type="ECO:0000250" key="1"/>
<evidence type="ECO:0000305" key="2"/>
<proteinExistence type="inferred from homology"/>
<feature type="chain" id="PRO_0000161124" description="Elongation factor Ts">
    <location>
        <begin position="1"/>
        <end position="294"/>
    </location>
</feature>
<feature type="region of interest" description="Involved in Mg(2+) ion dislocation from EF-Tu" evidence="1">
    <location>
        <begin position="79"/>
        <end position="82"/>
    </location>
</feature>
<gene>
    <name type="primary">tsf</name>
    <name type="ordered locus">GK1250</name>
</gene>
<accession>Q5L0K1</accession>
<dbReference type="EMBL" id="BA000043">
    <property type="protein sequence ID" value="BAD75535.1"/>
    <property type="molecule type" value="Genomic_DNA"/>
</dbReference>
<dbReference type="RefSeq" id="WP_011230750.1">
    <property type="nucleotide sequence ID" value="NC_006510.1"/>
</dbReference>
<dbReference type="SMR" id="Q5L0K1"/>
<dbReference type="STRING" id="235909.GK1250"/>
<dbReference type="GeneID" id="32063144"/>
<dbReference type="KEGG" id="gka:GK1250"/>
<dbReference type="eggNOG" id="COG0264">
    <property type="taxonomic scope" value="Bacteria"/>
</dbReference>
<dbReference type="HOGENOM" id="CLU_047155_0_2_9"/>
<dbReference type="Proteomes" id="UP000001172">
    <property type="component" value="Chromosome"/>
</dbReference>
<dbReference type="GO" id="GO:0005737">
    <property type="term" value="C:cytoplasm"/>
    <property type="evidence" value="ECO:0007669"/>
    <property type="project" value="UniProtKB-SubCell"/>
</dbReference>
<dbReference type="GO" id="GO:0003746">
    <property type="term" value="F:translation elongation factor activity"/>
    <property type="evidence" value="ECO:0007669"/>
    <property type="project" value="UniProtKB-UniRule"/>
</dbReference>
<dbReference type="CDD" id="cd14275">
    <property type="entry name" value="UBA_EF-Ts"/>
    <property type="match status" value="1"/>
</dbReference>
<dbReference type="FunFam" id="1.10.286.20:FF:000003">
    <property type="entry name" value="Elongation factor Ts"/>
    <property type="match status" value="1"/>
</dbReference>
<dbReference type="FunFam" id="1.10.8.10:FF:000001">
    <property type="entry name" value="Elongation factor Ts"/>
    <property type="match status" value="1"/>
</dbReference>
<dbReference type="Gene3D" id="1.10.286.20">
    <property type="match status" value="1"/>
</dbReference>
<dbReference type="Gene3D" id="1.10.8.10">
    <property type="entry name" value="DNA helicase RuvA subunit, C-terminal domain"/>
    <property type="match status" value="1"/>
</dbReference>
<dbReference type="Gene3D" id="3.30.479.20">
    <property type="entry name" value="Elongation factor Ts, dimerisation domain"/>
    <property type="match status" value="2"/>
</dbReference>
<dbReference type="HAMAP" id="MF_00050">
    <property type="entry name" value="EF_Ts"/>
    <property type="match status" value="1"/>
</dbReference>
<dbReference type="InterPro" id="IPR036402">
    <property type="entry name" value="EF-Ts_dimer_sf"/>
</dbReference>
<dbReference type="InterPro" id="IPR001816">
    <property type="entry name" value="Transl_elong_EFTs/EF1B"/>
</dbReference>
<dbReference type="InterPro" id="IPR014039">
    <property type="entry name" value="Transl_elong_EFTs/EF1B_dimer"/>
</dbReference>
<dbReference type="InterPro" id="IPR018101">
    <property type="entry name" value="Transl_elong_Ts_CS"/>
</dbReference>
<dbReference type="InterPro" id="IPR009060">
    <property type="entry name" value="UBA-like_sf"/>
</dbReference>
<dbReference type="NCBIfam" id="TIGR00116">
    <property type="entry name" value="tsf"/>
    <property type="match status" value="1"/>
</dbReference>
<dbReference type="PANTHER" id="PTHR11741">
    <property type="entry name" value="ELONGATION FACTOR TS"/>
    <property type="match status" value="1"/>
</dbReference>
<dbReference type="PANTHER" id="PTHR11741:SF0">
    <property type="entry name" value="ELONGATION FACTOR TS, MITOCHONDRIAL"/>
    <property type="match status" value="1"/>
</dbReference>
<dbReference type="Pfam" id="PF25025">
    <property type="entry name" value="EF-Ts_N"/>
    <property type="match status" value="1"/>
</dbReference>
<dbReference type="Pfam" id="PF00889">
    <property type="entry name" value="EF_TS"/>
    <property type="match status" value="1"/>
</dbReference>
<dbReference type="SUPFAM" id="SSF54713">
    <property type="entry name" value="Elongation factor Ts (EF-Ts), dimerisation domain"/>
    <property type="match status" value="2"/>
</dbReference>
<dbReference type="SUPFAM" id="SSF46934">
    <property type="entry name" value="UBA-like"/>
    <property type="match status" value="1"/>
</dbReference>
<dbReference type="PROSITE" id="PS01126">
    <property type="entry name" value="EF_TS_1"/>
    <property type="match status" value="1"/>
</dbReference>
<dbReference type="PROSITE" id="PS01127">
    <property type="entry name" value="EF_TS_2"/>
    <property type="match status" value="1"/>
</dbReference>
<keyword id="KW-0963">Cytoplasm</keyword>
<keyword id="KW-0251">Elongation factor</keyword>
<keyword id="KW-0648">Protein biosynthesis</keyword>
<keyword id="KW-1185">Reference proteome</keyword>
<reference key="1">
    <citation type="journal article" date="2004" name="Nucleic Acids Res.">
        <title>Thermoadaptation trait revealed by the genome sequence of thermophilic Geobacillus kaustophilus.</title>
        <authorList>
            <person name="Takami H."/>
            <person name="Takaki Y."/>
            <person name="Chee G.-J."/>
            <person name="Nishi S."/>
            <person name="Shimamura S."/>
            <person name="Suzuki H."/>
            <person name="Matsui S."/>
            <person name="Uchiyama I."/>
        </authorList>
    </citation>
    <scope>NUCLEOTIDE SEQUENCE [LARGE SCALE GENOMIC DNA]</scope>
    <source>
        <strain>HTA426</strain>
    </source>
</reference>
<comment type="function">
    <text evidence="1">Associates with the EF-Tu.GDP complex and induces the exchange of GDP to GTP. It remains bound to the aminoacyl-tRNA.EF-Tu.GTP complex up to the GTP hydrolysis stage on the ribosome (By similarity).</text>
</comment>
<comment type="subcellular location">
    <subcellularLocation>
        <location evidence="1">Cytoplasm</location>
    </subcellularLocation>
</comment>
<comment type="similarity">
    <text evidence="2">Belongs to the EF-Ts family.</text>
</comment>